<comment type="subcellular location">
    <subcellularLocation>
        <location evidence="1">Cell inner membrane</location>
        <topology evidence="1">Multi-pass membrane protein</topology>
    </subcellularLocation>
</comment>
<comment type="similarity">
    <text evidence="3">Belongs to the membrane fusion protein (MFP) (TC 8.A.1) family.</text>
</comment>
<organism>
    <name type="scientific">Escherichia coli O157:H7</name>
    <dbReference type="NCBI Taxonomy" id="83334"/>
    <lineage>
        <taxon>Bacteria</taxon>
        <taxon>Pseudomonadati</taxon>
        <taxon>Pseudomonadota</taxon>
        <taxon>Gammaproteobacteria</taxon>
        <taxon>Enterobacterales</taxon>
        <taxon>Enterobacteriaceae</taxon>
        <taxon>Escherichia</taxon>
    </lineage>
</organism>
<sequence>MDLLIVLTYVALAWAVFKIFRIPVNQWTLATAALGGVFLVSGLILLMNYNHPYTFTAQKAVIAIPITPQVTGIVTEVTDKNNQLIQKGEVLFKLDPVRYQARVDRLQADLMTATHNIKTLRAQLTEAQANTTQVSAERDRLFKNYQRYLKGSQAAVNPFSERDIDDARQNFLAQDALVKGSVAEQAQIQSQLDSMVNGEQSQIVSLRAQLTEAKYNLEQTVIRAPSNGYVTQVLIRPGTYAAALPLRPVMVFIPEQKRQIVAQFRQNSLLRLKPGDDAEVVFNALPGQVFHGKLTSILPVVPGGSYQAQGVLQSLTVVPGTDGVLGTIELDPNDDIDALPDGIYAQVAVYSDHFSHVSVMRKVLLRMTSWMHYLYLDH</sequence>
<evidence type="ECO:0000250" key="1"/>
<evidence type="ECO:0000255" key="2"/>
<evidence type="ECO:0000305" key="3"/>
<keyword id="KW-0997">Cell inner membrane</keyword>
<keyword id="KW-1003">Cell membrane</keyword>
<keyword id="KW-0472">Membrane</keyword>
<keyword id="KW-1185">Reference proteome</keyword>
<keyword id="KW-0812">Transmembrane</keyword>
<keyword id="KW-1133">Transmembrane helix</keyword>
<name>YIBH_ECO57</name>
<reference key="1">
    <citation type="journal article" date="2001" name="Nature">
        <title>Genome sequence of enterohaemorrhagic Escherichia coli O157:H7.</title>
        <authorList>
            <person name="Perna N.T."/>
            <person name="Plunkett G. III"/>
            <person name="Burland V."/>
            <person name="Mau B."/>
            <person name="Glasner J.D."/>
            <person name="Rose D.J."/>
            <person name="Mayhew G.F."/>
            <person name="Evans P.S."/>
            <person name="Gregor J."/>
            <person name="Kirkpatrick H.A."/>
            <person name="Posfai G."/>
            <person name="Hackett J."/>
            <person name="Klink S."/>
            <person name="Boutin A."/>
            <person name="Shao Y."/>
            <person name="Miller L."/>
            <person name="Grotbeck E.J."/>
            <person name="Davis N.W."/>
            <person name="Lim A."/>
            <person name="Dimalanta E.T."/>
            <person name="Potamousis K."/>
            <person name="Apodaca J."/>
            <person name="Anantharaman T.S."/>
            <person name="Lin J."/>
            <person name="Yen G."/>
            <person name="Schwartz D.C."/>
            <person name="Welch R.A."/>
            <person name="Blattner F.R."/>
        </authorList>
    </citation>
    <scope>NUCLEOTIDE SEQUENCE [LARGE SCALE GENOMIC DNA]</scope>
    <source>
        <strain>O157:H7 / EDL933 / ATCC 700927 / EHEC</strain>
    </source>
</reference>
<reference key="2">
    <citation type="journal article" date="2001" name="DNA Res.">
        <title>Complete genome sequence of enterohemorrhagic Escherichia coli O157:H7 and genomic comparison with a laboratory strain K-12.</title>
        <authorList>
            <person name="Hayashi T."/>
            <person name="Makino K."/>
            <person name="Ohnishi M."/>
            <person name="Kurokawa K."/>
            <person name="Ishii K."/>
            <person name="Yokoyama K."/>
            <person name="Han C.-G."/>
            <person name="Ohtsubo E."/>
            <person name="Nakayama K."/>
            <person name="Murata T."/>
            <person name="Tanaka M."/>
            <person name="Tobe T."/>
            <person name="Iida T."/>
            <person name="Takami H."/>
            <person name="Honda T."/>
            <person name="Sasakawa C."/>
            <person name="Ogasawara N."/>
            <person name="Yasunaga T."/>
            <person name="Kuhara S."/>
            <person name="Shiba T."/>
            <person name="Hattori M."/>
            <person name="Shinagawa H."/>
        </authorList>
    </citation>
    <scope>NUCLEOTIDE SEQUENCE [LARGE SCALE GENOMIC DNA]</scope>
    <source>
        <strain>O157:H7 / Sakai / RIMD 0509952 / EHEC</strain>
    </source>
</reference>
<dbReference type="EMBL" id="AE005174">
    <property type="protein sequence ID" value="AAG58741.1"/>
    <property type="molecule type" value="Genomic_DNA"/>
</dbReference>
<dbReference type="EMBL" id="BA000007">
    <property type="protein sequence ID" value="BAB37896.1"/>
    <property type="molecule type" value="Genomic_DNA"/>
</dbReference>
<dbReference type="PIR" id="A86035">
    <property type="entry name" value="A86035"/>
</dbReference>
<dbReference type="PIR" id="A98188">
    <property type="entry name" value="A98188"/>
</dbReference>
<dbReference type="RefSeq" id="NP_312500.1">
    <property type="nucleotide sequence ID" value="NC_002695.1"/>
</dbReference>
<dbReference type="RefSeq" id="WP_000364939.1">
    <property type="nucleotide sequence ID" value="NZ_VOAI01000021.1"/>
</dbReference>
<dbReference type="SMR" id="P0AFV1"/>
<dbReference type="STRING" id="155864.Z5021"/>
<dbReference type="GeneID" id="915586"/>
<dbReference type="KEGG" id="ece:Z5021"/>
<dbReference type="KEGG" id="ecs:ECs_4473"/>
<dbReference type="PATRIC" id="fig|386585.9.peg.4685"/>
<dbReference type="eggNOG" id="COG1566">
    <property type="taxonomic scope" value="Bacteria"/>
</dbReference>
<dbReference type="HOGENOM" id="CLU_018816_15_3_6"/>
<dbReference type="OMA" id="AWAIFKI"/>
<dbReference type="Proteomes" id="UP000000558">
    <property type="component" value="Chromosome"/>
</dbReference>
<dbReference type="Proteomes" id="UP000002519">
    <property type="component" value="Chromosome"/>
</dbReference>
<dbReference type="GO" id="GO:0005886">
    <property type="term" value="C:plasma membrane"/>
    <property type="evidence" value="ECO:0007669"/>
    <property type="project" value="UniProtKB-SubCell"/>
</dbReference>
<dbReference type="GO" id="GO:0055085">
    <property type="term" value="P:transmembrane transport"/>
    <property type="evidence" value="ECO:0007669"/>
    <property type="project" value="InterPro"/>
</dbReference>
<dbReference type="FunFam" id="2.40.30.170:FF:000004">
    <property type="entry name" value="Auxiliary transport protein, membrane fusion protein family"/>
    <property type="match status" value="1"/>
</dbReference>
<dbReference type="FunFam" id="2.40.50.100:FF:000035">
    <property type="entry name" value="Auxiliary transport protein, membrane fusion protein family"/>
    <property type="match status" value="1"/>
</dbReference>
<dbReference type="Gene3D" id="2.40.30.170">
    <property type="match status" value="1"/>
</dbReference>
<dbReference type="Gene3D" id="2.40.50.100">
    <property type="match status" value="1"/>
</dbReference>
<dbReference type="InterPro" id="IPR043602">
    <property type="entry name" value="CusB-like_dom_1"/>
</dbReference>
<dbReference type="InterPro" id="IPR032317">
    <property type="entry name" value="CusB_D23"/>
</dbReference>
<dbReference type="InterPro" id="IPR050739">
    <property type="entry name" value="MFP"/>
</dbReference>
<dbReference type="PANTHER" id="PTHR30386:SF18">
    <property type="entry name" value="INNER MEMBRANE PROTEIN YIAV-RELATED"/>
    <property type="match status" value="1"/>
</dbReference>
<dbReference type="PANTHER" id="PTHR30386">
    <property type="entry name" value="MEMBRANE FUSION SUBUNIT OF EMRAB-TOLC MULTIDRUG EFFLUX PUMP"/>
    <property type="match status" value="1"/>
</dbReference>
<dbReference type="Pfam" id="PF00529">
    <property type="entry name" value="CusB_dom_1"/>
    <property type="match status" value="1"/>
</dbReference>
<dbReference type="Pfam" id="PF16576">
    <property type="entry name" value="HlyD_D23"/>
    <property type="match status" value="1"/>
</dbReference>
<dbReference type="SUPFAM" id="SSF111369">
    <property type="entry name" value="HlyD-like secretion proteins"/>
    <property type="match status" value="1"/>
</dbReference>
<proteinExistence type="inferred from homology"/>
<accession>P0AFV1</accession>
<accession>P32107</accession>
<protein>
    <recommendedName>
        <fullName>Inner membrane protein YibH</fullName>
    </recommendedName>
</protein>
<feature type="chain" id="PRO_0000201896" description="Inner membrane protein YibH">
    <location>
        <begin position="1"/>
        <end position="378"/>
    </location>
</feature>
<feature type="topological domain" description="Periplasmic" evidence="2">
    <location>
        <begin position="1"/>
        <end position="3"/>
    </location>
</feature>
<feature type="transmembrane region" description="Helical" evidence="2">
    <location>
        <begin position="4"/>
        <end position="24"/>
    </location>
</feature>
<feature type="topological domain" description="Cytoplasmic" evidence="2">
    <location>
        <begin position="25"/>
        <end position="26"/>
    </location>
</feature>
<feature type="transmembrane region" description="Helical" evidence="2">
    <location>
        <begin position="27"/>
        <end position="47"/>
    </location>
</feature>
<feature type="topological domain" description="Periplasmic" evidence="2">
    <location>
        <begin position="48"/>
        <end position="54"/>
    </location>
</feature>
<feature type="transmembrane region" description="Helical" evidence="2">
    <location>
        <begin position="55"/>
        <end position="75"/>
    </location>
</feature>
<feature type="topological domain" description="Cytoplasmic" evidence="2">
    <location>
        <begin position="76"/>
        <end position="232"/>
    </location>
</feature>
<feature type="transmembrane region" description="Helical" evidence="2">
    <location>
        <begin position="233"/>
        <end position="253"/>
    </location>
</feature>
<feature type="topological domain" description="Periplasmic" evidence="2">
    <location>
        <begin position="254"/>
        <end position="280"/>
    </location>
</feature>
<feature type="transmembrane region" description="Helical" evidence="2">
    <location>
        <begin position="281"/>
        <end position="301"/>
    </location>
</feature>
<feature type="topological domain" description="Cytoplasmic" evidence="2">
    <location>
        <begin position="302"/>
        <end position="309"/>
    </location>
</feature>
<feature type="transmembrane region" description="Helical" evidence="2">
    <location>
        <begin position="310"/>
        <end position="330"/>
    </location>
</feature>
<feature type="topological domain" description="Periplasmic" evidence="2">
    <location>
        <begin position="331"/>
        <end position="378"/>
    </location>
</feature>
<gene>
    <name type="primary">yibH</name>
    <name type="ordered locus">Z5021</name>
    <name type="ordered locus">ECs4473</name>
</gene>